<name>PANB_BORPD</name>
<evidence type="ECO:0000255" key="1">
    <source>
        <dbReference type="HAMAP-Rule" id="MF_00156"/>
    </source>
</evidence>
<feature type="chain" id="PRO_1000096943" description="3-methyl-2-oxobutanoate hydroxymethyltransferase">
    <location>
        <begin position="1"/>
        <end position="275"/>
    </location>
</feature>
<feature type="active site" description="Proton acceptor" evidence="1">
    <location>
        <position position="187"/>
    </location>
</feature>
<feature type="binding site" evidence="1">
    <location>
        <begin position="49"/>
        <end position="50"/>
    </location>
    <ligand>
        <name>3-methyl-2-oxobutanoate</name>
        <dbReference type="ChEBI" id="CHEBI:11851"/>
    </ligand>
</feature>
<feature type="binding site" evidence="1">
    <location>
        <position position="49"/>
    </location>
    <ligand>
        <name>Mg(2+)</name>
        <dbReference type="ChEBI" id="CHEBI:18420"/>
    </ligand>
</feature>
<feature type="binding site" evidence="1">
    <location>
        <position position="88"/>
    </location>
    <ligand>
        <name>3-methyl-2-oxobutanoate</name>
        <dbReference type="ChEBI" id="CHEBI:11851"/>
    </ligand>
</feature>
<feature type="binding site" evidence="1">
    <location>
        <position position="88"/>
    </location>
    <ligand>
        <name>Mg(2+)</name>
        <dbReference type="ChEBI" id="CHEBI:18420"/>
    </ligand>
</feature>
<feature type="binding site" evidence="1">
    <location>
        <position position="118"/>
    </location>
    <ligand>
        <name>3-methyl-2-oxobutanoate</name>
        <dbReference type="ChEBI" id="CHEBI:11851"/>
    </ligand>
</feature>
<feature type="binding site" evidence="1">
    <location>
        <position position="120"/>
    </location>
    <ligand>
        <name>Mg(2+)</name>
        <dbReference type="ChEBI" id="CHEBI:18420"/>
    </ligand>
</feature>
<dbReference type="EC" id="2.1.2.11" evidence="1"/>
<dbReference type="EMBL" id="AM902716">
    <property type="protein sequence ID" value="CAP45231.1"/>
    <property type="molecule type" value="Genomic_DNA"/>
</dbReference>
<dbReference type="SMR" id="A9IHJ7"/>
<dbReference type="STRING" id="94624.Bpet4879"/>
<dbReference type="KEGG" id="bpt:Bpet4879"/>
<dbReference type="eggNOG" id="COG0413">
    <property type="taxonomic scope" value="Bacteria"/>
</dbReference>
<dbReference type="UniPathway" id="UPA00028">
    <property type="reaction ID" value="UER00003"/>
</dbReference>
<dbReference type="Proteomes" id="UP000001225">
    <property type="component" value="Chromosome"/>
</dbReference>
<dbReference type="GO" id="GO:0005737">
    <property type="term" value="C:cytoplasm"/>
    <property type="evidence" value="ECO:0007669"/>
    <property type="project" value="UniProtKB-SubCell"/>
</dbReference>
<dbReference type="GO" id="GO:0003864">
    <property type="term" value="F:3-methyl-2-oxobutanoate hydroxymethyltransferase activity"/>
    <property type="evidence" value="ECO:0007669"/>
    <property type="project" value="UniProtKB-UniRule"/>
</dbReference>
<dbReference type="GO" id="GO:0000287">
    <property type="term" value="F:magnesium ion binding"/>
    <property type="evidence" value="ECO:0007669"/>
    <property type="project" value="TreeGrafter"/>
</dbReference>
<dbReference type="GO" id="GO:0015940">
    <property type="term" value="P:pantothenate biosynthetic process"/>
    <property type="evidence" value="ECO:0007669"/>
    <property type="project" value="UniProtKB-UniRule"/>
</dbReference>
<dbReference type="CDD" id="cd06557">
    <property type="entry name" value="KPHMT-like"/>
    <property type="match status" value="1"/>
</dbReference>
<dbReference type="FunFam" id="3.20.20.60:FF:000003">
    <property type="entry name" value="3-methyl-2-oxobutanoate hydroxymethyltransferase"/>
    <property type="match status" value="1"/>
</dbReference>
<dbReference type="Gene3D" id="3.20.20.60">
    <property type="entry name" value="Phosphoenolpyruvate-binding domains"/>
    <property type="match status" value="1"/>
</dbReference>
<dbReference type="HAMAP" id="MF_00156">
    <property type="entry name" value="PanB"/>
    <property type="match status" value="1"/>
</dbReference>
<dbReference type="InterPro" id="IPR003700">
    <property type="entry name" value="Pantoate_hydroxy_MeTrfase"/>
</dbReference>
<dbReference type="InterPro" id="IPR015813">
    <property type="entry name" value="Pyrv/PenolPyrv_kinase-like_dom"/>
</dbReference>
<dbReference type="InterPro" id="IPR040442">
    <property type="entry name" value="Pyrv_kinase-like_dom_sf"/>
</dbReference>
<dbReference type="NCBIfam" id="TIGR00222">
    <property type="entry name" value="panB"/>
    <property type="match status" value="1"/>
</dbReference>
<dbReference type="NCBIfam" id="NF001452">
    <property type="entry name" value="PRK00311.1"/>
    <property type="match status" value="1"/>
</dbReference>
<dbReference type="PANTHER" id="PTHR20881">
    <property type="entry name" value="3-METHYL-2-OXOBUTANOATE HYDROXYMETHYLTRANSFERASE"/>
    <property type="match status" value="1"/>
</dbReference>
<dbReference type="PANTHER" id="PTHR20881:SF0">
    <property type="entry name" value="3-METHYL-2-OXOBUTANOATE HYDROXYMETHYLTRANSFERASE"/>
    <property type="match status" value="1"/>
</dbReference>
<dbReference type="Pfam" id="PF02548">
    <property type="entry name" value="Pantoate_transf"/>
    <property type="match status" value="1"/>
</dbReference>
<dbReference type="PIRSF" id="PIRSF000388">
    <property type="entry name" value="Pantoate_hydroxy_MeTrfase"/>
    <property type="match status" value="1"/>
</dbReference>
<dbReference type="SUPFAM" id="SSF51621">
    <property type="entry name" value="Phosphoenolpyruvate/pyruvate domain"/>
    <property type="match status" value="1"/>
</dbReference>
<sequence length="275" mass="28668">MSAQQSQSRKTTTAIRQAKGPGKVVALTAYTAPMARQLDPHADLLLVGDSLGMVVYGLPSTLGVTLDMMIAHGAAVVRGSTQACVVVDLPFGSYQASPMQAFESAARVLAETGAQAVKLEGGVEMAETVQFLTARGVPVVSHIGLMPQQVNTVGGYKAQGMQADGSERILRDAQALQEAGAFALVVECTAEAVGRRVTEALQIPVIGIGASPACDGQILVTEDMLGMSGARVPRFVKQYAQLGDEIGRAAQRYAQDVRAGAFPAPEHCFGVQAKA</sequence>
<keyword id="KW-0963">Cytoplasm</keyword>
<keyword id="KW-0460">Magnesium</keyword>
<keyword id="KW-0479">Metal-binding</keyword>
<keyword id="KW-0566">Pantothenate biosynthesis</keyword>
<keyword id="KW-0808">Transferase</keyword>
<reference key="1">
    <citation type="journal article" date="2008" name="BMC Genomics">
        <title>The missing link: Bordetella petrii is endowed with both the metabolic versatility of environmental bacteria and virulence traits of pathogenic Bordetellae.</title>
        <authorList>
            <person name="Gross R."/>
            <person name="Guzman C.A."/>
            <person name="Sebaihia M."/>
            <person name="Martin dos Santos V.A.P."/>
            <person name="Pieper D.H."/>
            <person name="Koebnik R."/>
            <person name="Lechner M."/>
            <person name="Bartels D."/>
            <person name="Buhrmester J."/>
            <person name="Choudhuri J.V."/>
            <person name="Ebensen T."/>
            <person name="Gaigalat L."/>
            <person name="Herrmann S."/>
            <person name="Khachane A.N."/>
            <person name="Larisch C."/>
            <person name="Link S."/>
            <person name="Linke B."/>
            <person name="Meyer F."/>
            <person name="Mormann S."/>
            <person name="Nakunst D."/>
            <person name="Rueckert C."/>
            <person name="Schneiker-Bekel S."/>
            <person name="Schulze K."/>
            <person name="Voerholter F.-J."/>
            <person name="Yevsa T."/>
            <person name="Engle J.T."/>
            <person name="Goldman W.E."/>
            <person name="Puehler A."/>
            <person name="Goebel U.B."/>
            <person name="Goesmann A."/>
            <person name="Bloecker H."/>
            <person name="Kaiser O."/>
            <person name="Martinez-Arias R."/>
        </authorList>
    </citation>
    <scope>NUCLEOTIDE SEQUENCE [LARGE SCALE GENOMIC DNA]</scope>
    <source>
        <strain>ATCC BAA-461 / DSM 12804 / CCUG 43448</strain>
    </source>
</reference>
<protein>
    <recommendedName>
        <fullName evidence="1">3-methyl-2-oxobutanoate hydroxymethyltransferase</fullName>
        <ecNumber evidence="1">2.1.2.11</ecNumber>
    </recommendedName>
    <alternativeName>
        <fullName evidence="1">Ketopantoate hydroxymethyltransferase</fullName>
        <shortName evidence="1">KPHMT</shortName>
    </alternativeName>
</protein>
<proteinExistence type="inferred from homology"/>
<gene>
    <name evidence="1" type="primary">panB</name>
    <name type="ordered locus">Bpet4879</name>
</gene>
<accession>A9IHJ7</accession>
<organism>
    <name type="scientific">Bordetella petrii (strain ATCC BAA-461 / DSM 12804 / CCUG 43448)</name>
    <dbReference type="NCBI Taxonomy" id="340100"/>
    <lineage>
        <taxon>Bacteria</taxon>
        <taxon>Pseudomonadati</taxon>
        <taxon>Pseudomonadota</taxon>
        <taxon>Betaproteobacteria</taxon>
        <taxon>Burkholderiales</taxon>
        <taxon>Alcaligenaceae</taxon>
        <taxon>Bordetella</taxon>
    </lineage>
</organism>
<comment type="function">
    <text evidence="1">Catalyzes the reversible reaction in which hydroxymethyl group from 5,10-methylenetetrahydrofolate is transferred onto alpha-ketoisovalerate to form ketopantoate.</text>
</comment>
<comment type="catalytic activity">
    <reaction evidence="1">
        <text>3-methyl-2-oxobutanoate + (6R)-5,10-methylene-5,6,7,8-tetrahydrofolate + H2O = 2-dehydropantoate + (6S)-5,6,7,8-tetrahydrofolate</text>
        <dbReference type="Rhea" id="RHEA:11824"/>
        <dbReference type="ChEBI" id="CHEBI:11561"/>
        <dbReference type="ChEBI" id="CHEBI:11851"/>
        <dbReference type="ChEBI" id="CHEBI:15377"/>
        <dbReference type="ChEBI" id="CHEBI:15636"/>
        <dbReference type="ChEBI" id="CHEBI:57453"/>
        <dbReference type="EC" id="2.1.2.11"/>
    </reaction>
</comment>
<comment type="cofactor">
    <cofactor evidence="1">
        <name>Mg(2+)</name>
        <dbReference type="ChEBI" id="CHEBI:18420"/>
    </cofactor>
    <text evidence="1">Binds 1 Mg(2+) ion per subunit.</text>
</comment>
<comment type="pathway">
    <text evidence="1">Cofactor biosynthesis; (R)-pantothenate biosynthesis; (R)-pantoate from 3-methyl-2-oxobutanoate: step 1/2.</text>
</comment>
<comment type="subunit">
    <text evidence="1">Homodecamer; pentamer of dimers.</text>
</comment>
<comment type="subcellular location">
    <subcellularLocation>
        <location evidence="1">Cytoplasm</location>
    </subcellularLocation>
</comment>
<comment type="similarity">
    <text evidence="1">Belongs to the PanB family.</text>
</comment>